<proteinExistence type="inferred from homology"/>
<evidence type="ECO:0000250" key="1"/>
<evidence type="ECO:0000305" key="2"/>
<protein>
    <recommendedName>
        <fullName>DNA-binding protein HU-beta</fullName>
    </recommendedName>
    <alternativeName>
        <fullName>HU-1</fullName>
    </alternativeName>
    <alternativeName>
        <fullName>NS1</fullName>
    </alternativeName>
</protein>
<sequence length="90" mass="9226">MNKSQLIDKIAAGADISKAAAGRALDAIIASVTESLKEGDDVALVGFGTFAVKERAARTGRNPQTGKEITIAAAKVPSFRAGKALKDAVN</sequence>
<keyword id="KW-0226">DNA condensation</keyword>
<keyword id="KW-0238">DNA-binding</keyword>
<keyword id="KW-1185">Reference proteome</keyword>
<dbReference type="EMBL" id="AE014075">
    <property type="protein sequence ID" value="AAN79034.1"/>
    <property type="molecule type" value="Genomic_DNA"/>
</dbReference>
<dbReference type="BMRB" id="P0ACF5"/>
<dbReference type="SMR" id="P0ACF5"/>
<dbReference type="STRING" id="199310.c0556"/>
<dbReference type="KEGG" id="ecc:c0556"/>
<dbReference type="eggNOG" id="COG0776">
    <property type="taxonomic scope" value="Bacteria"/>
</dbReference>
<dbReference type="HOGENOM" id="CLU_105066_3_2_6"/>
<dbReference type="BioCyc" id="ECOL199310:C0556-MONOMER"/>
<dbReference type="Proteomes" id="UP000001410">
    <property type="component" value="Chromosome"/>
</dbReference>
<dbReference type="GO" id="GO:0005829">
    <property type="term" value="C:cytosol"/>
    <property type="evidence" value="ECO:0007669"/>
    <property type="project" value="TreeGrafter"/>
</dbReference>
<dbReference type="GO" id="GO:0003677">
    <property type="term" value="F:DNA binding"/>
    <property type="evidence" value="ECO:0007669"/>
    <property type="project" value="UniProtKB-KW"/>
</dbReference>
<dbReference type="GO" id="GO:0030527">
    <property type="term" value="F:structural constituent of chromatin"/>
    <property type="evidence" value="ECO:0007669"/>
    <property type="project" value="InterPro"/>
</dbReference>
<dbReference type="GO" id="GO:0030261">
    <property type="term" value="P:chromosome condensation"/>
    <property type="evidence" value="ECO:0007669"/>
    <property type="project" value="UniProtKB-KW"/>
</dbReference>
<dbReference type="CDD" id="cd13831">
    <property type="entry name" value="HU"/>
    <property type="match status" value="1"/>
</dbReference>
<dbReference type="FunFam" id="4.10.520.10:FF:000001">
    <property type="entry name" value="DNA-binding protein HU"/>
    <property type="match status" value="1"/>
</dbReference>
<dbReference type="Gene3D" id="4.10.520.10">
    <property type="entry name" value="IHF-like DNA-binding proteins"/>
    <property type="match status" value="1"/>
</dbReference>
<dbReference type="InterPro" id="IPR000119">
    <property type="entry name" value="Hist_DNA-bd"/>
</dbReference>
<dbReference type="InterPro" id="IPR020816">
    <property type="entry name" value="Histone-like_DNA-bd_CS"/>
</dbReference>
<dbReference type="InterPro" id="IPR010992">
    <property type="entry name" value="IHF-like_DNA-bd_dom_sf"/>
</dbReference>
<dbReference type="NCBIfam" id="NF007945">
    <property type="entry name" value="PRK10664.1"/>
    <property type="match status" value="1"/>
</dbReference>
<dbReference type="PANTHER" id="PTHR33175">
    <property type="entry name" value="DNA-BINDING PROTEIN HU"/>
    <property type="match status" value="1"/>
</dbReference>
<dbReference type="PANTHER" id="PTHR33175:SF3">
    <property type="entry name" value="DNA-BINDING PROTEIN HU-BETA"/>
    <property type="match status" value="1"/>
</dbReference>
<dbReference type="Pfam" id="PF00216">
    <property type="entry name" value="Bac_DNA_binding"/>
    <property type="match status" value="1"/>
</dbReference>
<dbReference type="PRINTS" id="PR01727">
    <property type="entry name" value="DNABINDINGHU"/>
</dbReference>
<dbReference type="SMART" id="SM00411">
    <property type="entry name" value="BHL"/>
    <property type="match status" value="1"/>
</dbReference>
<dbReference type="SUPFAM" id="SSF47729">
    <property type="entry name" value="IHF-like DNA-binding proteins"/>
    <property type="match status" value="1"/>
</dbReference>
<dbReference type="PROSITE" id="PS00045">
    <property type="entry name" value="HISTONE_LIKE"/>
    <property type="match status" value="1"/>
</dbReference>
<feature type="chain" id="PRO_0000104941" description="DNA-binding protein HU-beta">
    <location>
        <begin position="1"/>
        <end position="90"/>
    </location>
</feature>
<reference key="1">
    <citation type="journal article" date="2002" name="Proc. Natl. Acad. Sci. U.S.A.">
        <title>Extensive mosaic structure revealed by the complete genome sequence of uropathogenic Escherichia coli.</title>
        <authorList>
            <person name="Welch R.A."/>
            <person name="Burland V."/>
            <person name="Plunkett G. III"/>
            <person name="Redford P."/>
            <person name="Roesch P."/>
            <person name="Rasko D."/>
            <person name="Buckles E.L."/>
            <person name="Liou S.-R."/>
            <person name="Boutin A."/>
            <person name="Hackett J."/>
            <person name="Stroud D."/>
            <person name="Mayhew G.F."/>
            <person name="Rose D.J."/>
            <person name="Zhou S."/>
            <person name="Schwartz D.C."/>
            <person name="Perna N.T."/>
            <person name="Mobley H.L.T."/>
            <person name="Donnenberg M.S."/>
            <person name="Blattner F.R."/>
        </authorList>
    </citation>
    <scope>NUCLEOTIDE SEQUENCE [LARGE SCALE GENOMIC DNA]</scope>
    <source>
        <strain>CFT073 / ATCC 700928 / UPEC</strain>
    </source>
</reference>
<name>DBHB_ECOL6</name>
<gene>
    <name type="primary">hupB</name>
    <name type="ordered locus">c0556</name>
</gene>
<comment type="function">
    <text evidence="1">Histone-like DNA-binding protein which is capable of wrapping DNA to stabilize it, and thus to prevent its denaturation under extreme environmental conditions.</text>
</comment>
<comment type="subunit">
    <text evidence="1">Heterodimer of an alpha and a beta chain.</text>
</comment>
<comment type="similarity">
    <text evidence="2">Belongs to the bacterial histone-like protein family.</text>
</comment>
<accession>P0ACF5</accession>
<accession>P02341</accession>
<organism>
    <name type="scientific">Escherichia coli O6:H1 (strain CFT073 / ATCC 700928 / UPEC)</name>
    <dbReference type="NCBI Taxonomy" id="199310"/>
    <lineage>
        <taxon>Bacteria</taxon>
        <taxon>Pseudomonadati</taxon>
        <taxon>Pseudomonadota</taxon>
        <taxon>Gammaproteobacteria</taxon>
        <taxon>Enterobacterales</taxon>
        <taxon>Enterobacteriaceae</taxon>
        <taxon>Escherichia</taxon>
    </lineage>
</organism>